<organism>
    <name type="scientific">Acinetobacter baumannii (strain ATCC 17978 / DSM 105126 / CIP 53.77 / LMG 1025 / NCDC KC755 / 5377)</name>
    <dbReference type="NCBI Taxonomy" id="400667"/>
    <lineage>
        <taxon>Bacteria</taxon>
        <taxon>Pseudomonadati</taxon>
        <taxon>Pseudomonadota</taxon>
        <taxon>Gammaproteobacteria</taxon>
        <taxon>Moraxellales</taxon>
        <taxon>Moraxellaceae</taxon>
        <taxon>Acinetobacter</taxon>
        <taxon>Acinetobacter calcoaceticus/baumannii complex</taxon>
    </lineage>
</organism>
<comment type="function">
    <text evidence="1">NAD-binding protein involved in the addition of a carboxymethylaminomethyl (cmnm) group at the wobble position (U34) of certain tRNAs, forming tRNA-cmnm(5)s(2)U34.</text>
</comment>
<comment type="cofactor">
    <cofactor evidence="1">
        <name>FAD</name>
        <dbReference type="ChEBI" id="CHEBI:57692"/>
    </cofactor>
</comment>
<comment type="subunit">
    <text evidence="1">Homodimer. Heterotetramer of two MnmE and two MnmG subunits.</text>
</comment>
<comment type="subcellular location">
    <subcellularLocation>
        <location evidence="1">Cytoplasm</location>
    </subcellularLocation>
</comment>
<comment type="similarity">
    <text evidence="1">Belongs to the MnmG family.</text>
</comment>
<evidence type="ECO:0000255" key="1">
    <source>
        <dbReference type="HAMAP-Rule" id="MF_00129"/>
    </source>
</evidence>
<gene>
    <name evidence="1" type="primary">mnmG</name>
    <name evidence="1" type="synonym">gidA</name>
    <name type="ordered locus">A1S_2182</name>
</gene>
<keyword id="KW-0963">Cytoplasm</keyword>
<keyword id="KW-0274">FAD</keyword>
<keyword id="KW-0285">Flavoprotein</keyword>
<keyword id="KW-0520">NAD</keyword>
<keyword id="KW-0819">tRNA processing</keyword>
<name>MNMG_ACIBT</name>
<reference key="1">
    <citation type="journal article" date="2007" name="Genes Dev.">
        <title>New insights into Acinetobacter baumannii pathogenesis revealed by high-density pyrosequencing and transposon mutagenesis.</title>
        <authorList>
            <person name="Smith M.G."/>
            <person name="Gianoulis T.A."/>
            <person name="Pukatzki S."/>
            <person name="Mekalanos J.J."/>
            <person name="Ornston L.N."/>
            <person name="Gerstein M."/>
            <person name="Snyder M."/>
        </authorList>
    </citation>
    <scope>NUCLEOTIDE SEQUENCE [LARGE SCALE GENOMIC DNA]</scope>
    <source>
        <strain>ATCC 17978 / DSM 105126 / CIP 53.77 / LMG 1025 / NCDC KC755 / 5377</strain>
    </source>
</reference>
<accession>A3M6R5</accession>
<sequence>MHYPKVYDVIVIGGGHAGTEAALAAARMGRQTLLLTHNIETLGQMSCNPAIGGIGKSHLVREIDALGGAMALAADKGGIQFRILNSRKGAAVRATRAQADRVRYKAAIRETLENQANLDIFQQAADDLIVEGDTVKGVVTQMGIRFDAKTVVLTTGTFLGGVIHVGLEKSSGGRAGDPPSIALAQRLRELKLPVGRLKTGTPPRIDARSVDFSVMTPQPGDFPSPVMSFMGDVSMHPEQVNCYITHTNEKTHDIIRGGLDRSPMYTGVIEGVGPRYCPSIEDKIHRFSDKDSHQVFLEPEGLDTHELYPNGISTSLPFDVQFELVRSIRGMENAHILRPGYAIEYDYFNPQALKFTLETKAINGLYFAGQINGTTGYEEAGAQGLLAGLNAARRAWEQEEWTPKRDQAYMGVLVDDLITLGTKEPYRMFTSRAEYRLMLREDNADQRLTTIGRELGLVDDVRWAAYCEKMEAVERETSRLQHLWAAPNNPMGKKFVEMTGADLSKECSAIDLLKRPNINFSQIAELTGSEVSQQVGEQIEIAVKYEGYINRQHEDVAQLKRLEETKIPADFDYDVVSGLSREITQKLKTVRPETLAQASRIPGVTPAAVQLVMITIRKNNMTKKTA</sequence>
<dbReference type="EMBL" id="CP000521">
    <property type="protein sequence ID" value="ABO12609.2"/>
    <property type="molecule type" value="Genomic_DNA"/>
</dbReference>
<dbReference type="RefSeq" id="WP_000559185.1">
    <property type="nucleotide sequence ID" value="NZ_CP053098.1"/>
</dbReference>
<dbReference type="SMR" id="A3M6R5"/>
<dbReference type="KEGG" id="acb:A1S_2182"/>
<dbReference type="HOGENOM" id="CLU_007831_2_2_6"/>
<dbReference type="GO" id="GO:0005829">
    <property type="term" value="C:cytosol"/>
    <property type="evidence" value="ECO:0007669"/>
    <property type="project" value="TreeGrafter"/>
</dbReference>
<dbReference type="GO" id="GO:0050660">
    <property type="term" value="F:flavin adenine dinucleotide binding"/>
    <property type="evidence" value="ECO:0007669"/>
    <property type="project" value="UniProtKB-UniRule"/>
</dbReference>
<dbReference type="GO" id="GO:0030488">
    <property type="term" value="P:tRNA methylation"/>
    <property type="evidence" value="ECO:0007669"/>
    <property type="project" value="TreeGrafter"/>
</dbReference>
<dbReference type="GO" id="GO:0002098">
    <property type="term" value="P:tRNA wobble uridine modification"/>
    <property type="evidence" value="ECO:0007669"/>
    <property type="project" value="InterPro"/>
</dbReference>
<dbReference type="FunFam" id="1.10.10.1800:FF:000001">
    <property type="entry name" value="tRNA uridine 5-carboxymethylaminomethyl modification enzyme MnmG"/>
    <property type="match status" value="1"/>
</dbReference>
<dbReference type="FunFam" id="1.10.150.570:FF:000001">
    <property type="entry name" value="tRNA uridine 5-carboxymethylaminomethyl modification enzyme MnmG"/>
    <property type="match status" value="1"/>
</dbReference>
<dbReference type="FunFam" id="3.50.50.60:FF:000002">
    <property type="entry name" value="tRNA uridine 5-carboxymethylaminomethyl modification enzyme MnmG"/>
    <property type="match status" value="1"/>
</dbReference>
<dbReference type="FunFam" id="3.50.50.60:FF:000010">
    <property type="entry name" value="tRNA uridine 5-carboxymethylaminomethyl modification enzyme MnmG"/>
    <property type="match status" value="1"/>
</dbReference>
<dbReference type="Gene3D" id="3.50.50.60">
    <property type="entry name" value="FAD/NAD(P)-binding domain"/>
    <property type="match status" value="2"/>
</dbReference>
<dbReference type="Gene3D" id="1.10.150.570">
    <property type="entry name" value="GidA associated domain, C-terminal subdomain"/>
    <property type="match status" value="1"/>
</dbReference>
<dbReference type="Gene3D" id="1.10.10.1800">
    <property type="entry name" value="tRNA uridine 5-carboxymethylaminomethyl modification enzyme MnmG/GidA"/>
    <property type="match status" value="1"/>
</dbReference>
<dbReference type="HAMAP" id="MF_00129">
    <property type="entry name" value="MnmG_GidA"/>
    <property type="match status" value="1"/>
</dbReference>
<dbReference type="InterPro" id="IPR036188">
    <property type="entry name" value="FAD/NAD-bd_sf"/>
</dbReference>
<dbReference type="InterPro" id="IPR049312">
    <property type="entry name" value="GIDA_C_N"/>
</dbReference>
<dbReference type="InterPro" id="IPR004416">
    <property type="entry name" value="MnmG"/>
</dbReference>
<dbReference type="InterPro" id="IPR002218">
    <property type="entry name" value="MnmG-rel"/>
</dbReference>
<dbReference type="InterPro" id="IPR020595">
    <property type="entry name" value="MnmG-rel_CS"/>
</dbReference>
<dbReference type="InterPro" id="IPR026904">
    <property type="entry name" value="MnmG_C"/>
</dbReference>
<dbReference type="InterPro" id="IPR047001">
    <property type="entry name" value="MnmG_C_subdom"/>
</dbReference>
<dbReference type="InterPro" id="IPR044920">
    <property type="entry name" value="MnmG_C_subdom_sf"/>
</dbReference>
<dbReference type="InterPro" id="IPR040131">
    <property type="entry name" value="MnmG_N"/>
</dbReference>
<dbReference type="NCBIfam" id="TIGR00136">
    <property type="entry name" value="mnmG_gidA"/>
    <property type="match status" value="1"/>
</dbReference>
<dbReference type="PANTHER" id="PTHR11806">
    <property type="entry name" value="GLUCOSE INHIBITED DIVISION PROTEIN A"/>
    <property type="match status" value="1"/>
</dbReference>
<dbReference type="PANTHER" id="PTHR11806:SF0">
    <property type="entry name" value="PROTEIN MTO1 HOMOLOG, MITOCHONDRIAL"/>
    <property type="match status" value="1"/>
</dbReference>
<dbReference type="Pfam" id="PF01134">
    <property type="entry name" value="GIDA"/>
    <property type="match status" value="1"/>
</dbReference>
<dbReference type="Pfam" id="PF21680">
    <property type="entry name" value="GIDA_C_1st"/>
    <property type="match status" value="1"/>
</dbReference>
<dbReference type="Pfam" id="PF13932">
    <property type="entry name" value="SAM_GIDA_C"/>
    <property type="match status" value="1"/>
</dbReference>
<dbReference type="SMART" id="SM01228">
    <property type="entry name" value="GIDA_assoc_3"/>
    <property type="match status" value="1"/>
</dbReference>
<dbReference type="SUPFAM" id="SSF51905">
    <property type="entry name" value="FAD/NAD(P)-binding domain"/>
    <property type="match status" value="1"/>
</dbReference>
<dbReference type="PROSITE" id="PS01280">
    <property type="entry name" value="GIDA_1"/>
    <property type="match status" value="1"/>
</dbReference>
<dbReference type="PROSITE" id="PS01281">
    <property type="entry name" value="GIDA_2"/>
    <property type="match status" value="1"/>
</dbReference>
<protein>
    <recommendedName>
        <fullName evidence="1">tRNA uridine 5-carboxymethylaminomethyl modification enzyme MnmG</fullName>
    </recommendedName>
    <alternativeName>
        <fullName evidence="1">Glucose-inhibited division protein A</fullName>
    </alternativeName>
</protein>
<feature type="chain" id="PRO_0000345235" description="tRNA uridine 5-carboxymethylaminomethyl modification enzyme MnmG">
    <location>
        <begin position="1"/>
        <end position="626"/>
    </location>
</feature>
<feature type="binding site" evidence="1">
    <location>
        <begin position="13"/>
        <end position="18"/>
    </location>
    <ligand>
        <name>FAD</name>
        <dbReference type="ChEBI" id="CHEBI:57692"/>
    </ligand>
</feature>
<feature type="binding site" evidence="1">
    <location>
        <begin position="273"/>
        <end position="287"/>
    </location>
    <ligand>
        <name>NAD(+)</name>
        <dbReference type="ChEBI" id="CHEBI:57540"/>
    </ligand>
</feature>
<proteinExistence type="inferred from homology"/>